<feature type="chain" id="PRO_0000330577" description="Siroheme synthase 2">
    <location>
        <begin position="1"/>
        <end position="472"/>
    </location>
</feature>
<feature type="region of interest" description="Precorrin-2 dehydrogenase /sirohydrochlorin ferrochelatase" evidence="1">
    <location>
        <begin position="1"/>
        <end position="203"/>
    </location>
</feature>
<feature type="region of interest" description="Uroporphyrinogen-III C-methyltransferase" evidence="1">
    <location>
        <begin position="215"/>
        <end position="472"/>
    </location>
</feature>
<feature type="active site" description="Proton acceptor" evidence="1">
    <location>
        <position position="247"/>
    </location>
</feature>
<feature type="active site" description="Proton donor" evidence="1">
    <location>
        <position position="269"/>
    </location>
</feature>
<feature type="binding site" evidence="1">
    <location>
        <begin position="22"/>
        <end position="23"/>
    </location>
    <ligand>
        <name>NAD(+)</name>
        <dbReference type="ChEBI" id="CHEBI:57540"/>
    </ligand>
</feature>
<feature type="binding site" evidence="1">
    <location>
        <begin position="43"/>
        <end position="44"/>
    </location>
    <ligand>
        <name>NAD(+)</name>
        <dbReference type="ChEBI" id="CHEBI:57540"/>
    </ligand>
</feature>
<feature type="binding site" evidence="1">
    <location>
        <position position="224"/>
    </location>
    <ligand>
        <name>S-adenosyl-L-methionine</name>
        <dbReference type="ChEBI" id="CHEBI:59789"/>
    </ligand>
</feature>
<feature type="binding site" evidence="1">
    <location>
        <begin position="300"/>
        <end position="302"/>
    </location>
    <ligand>
        <name>S-adenosyl-L-methionine</name>
        <dbReference type="ChEBI" id="CHEBI:59789"/>
    </ligand>
</feature>
<feature type="binding site" evidence="1">
    <location>
        <position position="305"/>
    </location>
    <ligand>
        <name>S-adenosyl-L-methionine</name>
        <dbReference type="ChEBI" id="CHEBI:59789"/>
    </ligand>
</feature>
<feature type="binding site" evidence="1">
    <location>
        <begin position="330"/>
        <end position="331"/>
    </location>
    <ligand>
        <name>S-adenosyl-L-methionine</name>
        <dbReference type="ChEBI" id="CHEBI:59789"/>
    </ligand>
</feature>
<feature type="binding site" evidence="1">
    <location>
        <position position="382"/>
    </location>
    <ligand>
        <name>S-adenosyl-L-methionine</name>
        <dbReference type="ChEBI" id="CHEBI:59789"/>
    </ligand>
</feature>
<feature type="binding site" evidence="1">
    <location>
        <position position="411"/>
    </location>
    <ligand>
        <name>S-adenosyl-L-methionine</name>
        <dbReference type="ChEBI" id="CHEBI:59789"/>
    </ligand>
</feature>
<feature type="modified residue" description="Phosphoserine" evidence="1">
    <location>
        <position position="128"/>
    </location>
</feature>
<comment type="function">
    <text evidence="1">Multifunctional enzyme that catalyzes the SAM-dependent methylations of uroporphyrinogen III at position C-2 and C-7 to form precorrin-2 via precorrin-1. Then it catalyzes the NAD-dependent ring dehydrogenation of precorrin-2 to yield sirohydrochlorin. Finally, it catalyzes the ferrochelation of sirohydrochlorin to yield siroheme.</text>
</comment>
<comment type="catalytic activity">
    <reaction evidence="1">
        <text>uroporphyrinogen III + 2 S-adenosyl-L-methionine = precorrin-2 + 2 S-adenosyl-L-homocysteine + H(+)</text>
        <dbReference type="Rhea" id="RHEA:32459"/>
        <dbReference type="ChEBI" id="CHEBI:15378"/>
        <dbReference type="ChEBI" id="CHEBI:57308"/>
        <dbReference type="ChEBI" id="CHEBI:57856"/>
        <dbReference type="ChEBI" id="CHEBI:58827"/>
        <dbReference type="ChEBI" id="CHEBI:59789"/>
        <dbReference type="EC" id="2.1.1.107"/>
    </reaction>
</comment>
<comment type="catalytic activity">
    <reaction evidence="1">
        <text>precorrin-2 + NAD(+) = sirohydrochlorin + NADH + 2 H(+)</text>
        <dbReference type="Rhea" id="RHEA:15613"/>
        <dbReference type="ChEBI" id="CHEBI:15378"/>
        <dbReference type="ChEBI" id="CHEBI:57540"/>
        <dbReference type="ChEBI" id="CHEBI:57945"/>
        <dbReference type="ChEBI" id="CHEBI:58351"/>
        <dbReference type="ChEBI" id="CHEBI:58827"/>
        <dbReference type="EC" id="1.3.1.76"/>
    </reaction>
</comment>
<comment type="catalytic activity">
    <reaction evidence="1">
        <text>siroheme + 2 H(+) = sirohydrochlorin + Fe(2+)</text>
        <dbReference type="Rhea" id="RHEA:24360"/>
        <dbReference type="ChEBI" id="CHEBI:15378"/>
        <dbReference type="ChEBI" id="CHEBI:29033"/>
        <dbReference type="ChEBI" id="CHEBI:58351"/>
        <dbReference type="ChEBI" id="CHEBI:60052"/>
        <dbReference type="EC" id="4.99.1.4"/>
    </reaction>
</comment>
<comment type="pathway">
    <text evidence="1">Cofactor biosynthesis; adenosylcobalamin biosynthesis; precorrin-2 from uroporphyrinogen III: step 1/1.</text>
</comment>
<comment type="pathway">
    <text evidence="1">Cofactor biosynthesis; adenosylcobalamin biosynthesis; sirohydrochlorin from precorrin-2: step 1/1.</text>
</comment>
<comment type="pathway">
    <text evidence="1">Porphyrin-containing compound metabolism; siroheme biosynthesis; precorrin-2 from uroporphyrinogen III: step 1/1.</text>
</comment>
<comment type="pathway">
    <text evidence="1">Porphyrin-containing compound metabolism; siroheme biosynthesis; siroheme from sirohydrochlorin: step 1/1.</text>
</comment>
<comment type="pathway">
    <text evidence="1">Porphyrin-containing compound metabolism; siroheme biosynthesis; sirohydrochlorin from precorrin-2: step 1/1.</text>
</comment>
<comment type="similarity">
    <text evidence="1">In the N-terminal section; belongs to the precorrin-2 dehydrogenase / sirohydrochlorin ferrochelatase family.</text>
</comment>
<comment type="similarity">
    <text evidence="1">In the C-terminal section; belongs to the precorrin methyltransferase family.</text>
</comment>
<accession>A4TPZ1</accession>
<sequence length="472" mass="50904">MDYLPLFADLKQRPVLIVGGGEVAARKIELLHRAGAQVWVVAQTLSSELEQQYQDGRIHWLAQDFLPEQLDNVFLVIAATNDTVLNAAVFAAADQRCILANVVDDQPLCSFIFPSIVDRSPLVVAISSSGQAPVLARILREKLEALLPTRLSDMAAIAGRWRGRVKQHMASMGERRRFWEHAFSGRFASLISRGQLTEAENELQLSLEGQHRALGEVALVGAGPGDAGLLTLRGLQVMQQADVVLYDHLVSPEVLDLVRRDAERICVGKRAGAHSVTQEATNQLLVTLAQQGKRVVRLKGGDPFIFGRGGEELQVVAQAGIPFQVVPGVTAAAGATAYAGIPLTHRDHAQSVTFITGHCRPDGDDLDWQTLARGRQTLAIYMGTVKAAAISQQLIAHGRSSTTPVAVIGRGTRVDQQVLIGTLAQLESLAQQAPTPALLVIGEVVNLHHQIAWFGQQPQTESAISPSVVNLA</sequence>
<gene>
    <name evidence="1" type="primary">cysG2</name>
    <name type="ordered locus">YPDSF_2993</name>
</gene>
<evidence type="ECO:0000255" key="1">
    <source>
        <dbReference type="HAMAP-Rule" id="MF_01646"/>
    </source>
</evidence>
<proteinExistence type="inferred from homology"/>
<reference key="1">
    <citation type="submission" date="2007-02" db="EMBL/GenBank/DDBJ databases">
        <title>Complete sequence of chromosome of Yersinia pestis Pestoides F.</title>
        <authorList>
            <consortium name="US DOE Joint Genome Institute"/>
            <person name="Copeland A."/>
            <person name="Lucas S."/>
            <person name="Lapidus A."/>
            <person name="Barry K."/>
            <person name="Detter J.C."/>
            <person name="Glavina del Rio T."/>
            <person name="Hammon N."/>
            <person name="Israni S."/>
            <person name="Dalin E."/>
            <person name="Tice H."/>
            <person name="Pitluck S."/>
            <person name="Di Bartolo G."/>
            <person name="Chain P."/>
            <person name="Malfatti S."/>
            <person name="Shin M."/>
            <person name="Vergez L."/>
            <person name="Schmutz J."/>
            <person name="Larimer F."/>
            <person name="Land M."/>
            <person name="Hauser L."/>
            <person name="Worsham P."/>
            <person name="Chu M."/>
            <person name="Bearden S."/>
            <person name="Garcia E."/>
            <person name="Richardson P."/>
        </authorList>
    </citation>
    <scope>NUCLEOTIDE SEQUENCE [LARGE SCALE GENOMIC DNA]</scope>
    <source>
        <strain>Pestoides F</strain>
    </source>
</reference>
<protein>
    <recommendedName>
        <fullName evidence="1">Siroheme synthase 2</fullName>
    </recommendedName>
    <domain>
        <recommendedName>
            <fullName evidence="1">Uroporphyrinogen-III C-methyltransferase 2</fullName>
            <shortName evidence="1">Urogen III methylase 2</shortName>
            <ecNumber evidence="1">2.1.1.107</ecNumber>
        </recommendedName>
        <alternativeName>
            <fullName evidence="1">SUMT 2</fullName>
        </alternativeName>
        <alternativeName>
            <fullName evidence="1">Uroporphyrinogen III methylase 2</fullName>
            <shortName evidence="1">UROM 2</shortName>
        </alternativeName>
    </domain>
    <domain>
        <recommendedName>
            <fullName evidence="1">Precorrin-2 dehydrogenase 2</fullName>
            <ecNumber evidence="1">1.3.1.76</ecNumber>
        </recommendedName>
    </domain>
    <domain>
        <recommendedName>
            <fullName evidence="1">Sirohydrochlorin ferrochelatase 2</fullName>
            <ecNumber evidence="1">4.99.1.4</ecNumber>
        </recommendedName>
    </domain>
</protein>
<organism>
    <name type="scientific">Yersinia pestis (strain Pestoides F)</name>
    <dbReference type="NCBI Taxonomy" id="386656"/>
    <lineage>
        <taxon>Bacteria</taxon>
        <taxon>Pseudomonadati</taxon>
        <taxon>Pseudomonadota</taxon>
        <taxon>Gammaproteobacteria</taxon>
        <taxon>Enterobacterales</taxon>
        <taxon>Yersiniaceae</taxon>
        <taxon>Yersinia</taxon>
    </lineage>
</organism>
<dbReference type="EC" id="2.1.1.107" evidence="1"/>
<dbReference type="EC" id="1.3.1.76" evidence="1"/>
<dbReference type="EC" id="4.99.1.4" evidence="1"/>
<dbReference type="EMBL" id="CP000668">
    <property type="protein sequence ID" value="ABP41353.1"/>
    <property type="molecule type" value="Genomic_DNA"/>
</dbReference>
<dbReference type="PIR" id="AI0408">
    <property type="entry name" value="AI0408"/>
</dbReference>
<dbReference type="SMR" id="A4TPZ1"/>
<dbReference type="KEGG" id="ypp:YPDSF_2993"/>
<dbReference type="PATRIC" id="fig|386656.14.peg.1370"/>
<dbReference type="UniPathway" id="UPA00148">
    <property type="reaction ID" value="UER00211"/>
</dbReference>
<dbReference type="UniPathway" id="UPA00148">
    <property type="reaction ID" value="UER00222"/>
</dbReference>
<dbReference type="UniPathway" id="UPA00262">
    <property type="reaction ID" value="UER00211"/>
</dbReference>
<dbReference type="UniPathway" id="UPA00262">
    <property type="reaction ID" value="UER00222"/>
</dbReference>
<dbReference type="UniPathway" id="UPA00262">
    <property type="reaction ID" value="UER00376"/>
</dbReference>
<dbReference type="GO" id="GO:0051287">
    <property type="term" value="F:NAD binding"/>
    <property type="evidence" value="ECO:0007669"/>
    <property type="project" value="InterPro"/>
</dbReference>
<dbReference type="GO" id="GO:0043115">
    <property type="term" value="F:precorrin-2 dehydrogenase activity"/>
    <property type="evidence" value="ECO:0007669"/>
    <property type="project" value="UniProtKB-UniRule"/>
</dbReference>
<dbReference type="GO" id="GO:0051266">
    <property type="term" value="F:sirohydrochlorin ferrochelatase activity"/>
    <property type="evidence" value="ECO:0007669"/>
    <property type="project" value="UniProtKB-EC"/>
</dbReference>
<dbReference type="GO" id="GO:0004851">
    <property type="term" value="F:uroporphyrin-III C-methyltransferase activity"/>
    <property type="evidence" value="ECO:0007669"/>
    <property type="project" value="UniProtKB-UniRule"/>
</dbReference>
<dbReference type="GO" id="GO:0009236">
    <property type="term" value="P:cobalamin biosynthetic process"/>
    <property type="evidence" value="ECO:0007669"/>
    <property type="project" value="UniProtKB-UniRule"/>
</dbReference>
<dbReference type="GO" id="GO:0032259">
    <property type="term" value="P:methylation"/>
    <property type="evidence" value="ECO:0007669"/>
    <property type="project" value="UniProtKB-KW"/>
</dbReference>
<dbReference type="GO" id="GO:0019354">
    <property type="term" value="P:siroheme biosynthetic process"/>
    <property type="evidence" value="ECO:0007669"/>
    <property type="project" value="UniProtKB-UniRule"/>
</dbReference>
<dbReference type="CDD" id="cd11642">
    <property type="entry name" value="SUMT"/>
    <property type="match status" value="1"/>
</dbReference>
<dbReference type="FunFam" id="3.30.160.110:FF:000001">
    <property type="entry name" value="Siroheme synthase"/>
    <property type="match status" value="1"/>
</dbReference>
<dbReference type="FunFam" id="3.30.950.10:FF:000001">
    <property type="entry name" value="Siroheme synthase"/>
    <property type="match status" value="1"/>
</dbReference>
<dbReference type="FunFam" id="3.40.1010.10:FF:000001">
    <property type="entry name" value="Siroheme synthase"/>
    <property type="match status" value="1"/>
</dbReference>
<dbReference type="Gene3D" id="3.40.1010.10">
    <property type="entry name" value="Cobalt-precorrin-4 Transmethylase, Domain 1"/>
    <property type="match status" value="1"/>
</dbReference>
<dbReference type="Gene3D" id="3.30.950.10">
    <property type="entry name" value="Methyltransferase, Cobalt-precorrin-4 Transmethylase, Domain 2"/>
    <property type="match status" value="1"/>
</dbReference>
<dbReference type="Gene3D" id="3.40.50.720">
    <property type="entry name" value="NAD(P)-binding Rossmann-like Domain"/>
    <property type="match status" value="1"/>
</dbReference>
<dbReference type="Gene3D" id="1.10.8.210">
    <property type="entry name" value="Sirohaem synthase, dimerisation domain"/>
    <property type="match status" value="1"/>
</dbReference>
<dbReference type="Gene3D" id="3.30.160.110">
    <property type="entry name" value="Siroheme synthase, domain 2"/>
    <property type="match status" value="1"/>
</dbReference>
<dbReference type="HAMAP" id="MF_01646">
    <property type="entry name" value="Siroheme_synth"/>
    <property type="match status" value="1"/>
</dbReference>
<dbReference type="InterPro" id="IPR000878">
    <property type="entry name" value="4pyrrol_Mease"/>
</dbReference>
<dbReference type="InterPro" id="IPR035996">
    <property type="entry name" value="4pyrrol_Methylase_sf"/>
</dbReference>
<dbReference type="InterPro" id="IPR014777">
    <property type="entry name" value="4pyrrole_Mease_sub1"/>
</dbReference>
<dbReference type="InterPro" id="IPR014776">
    <property type="entry name" value="4pyrrole_Mease_sub2"/>
</dbReference>
<dbReference type="InterPro" id="IPR006366">
    <property type="entry name" value="CobA/CysG_C"/>
</dbReference>
<dbReference type="InterPro" id="IPR036291">
    <property type="entry name" value="NAD(P)-bd_dom_sf"/>
</dbReference>
<dbReference type="InterPro" id="IPR050161">
    <property type="entry name" value="Siro_Cobalamin_biosynth"/>
</dbReference>
<dbReference type="InterPro" id="IPR037115">
    <property type="entry name" value="Sirohaem_synt_dimer_dom_sf"/>
</dbReference>
<dbReference type="InterPro" id="IPR012409">
    <property type="entry name" value="Sirohaem_synth"/>
</dbReference>
<dbReference type="InterPro" id="IPR028281">
    <property type="entry name" value="Sirohaem_synthase_central"/>
</dbReference>
<dbReference type="InterPro" id="IPR019478">
    <property type="entry name" value="Sirohaem_synthase_dimer_dom"/>
</dbReference>
<dbReference type="InterPro" id="IPR006367">
    <property type="entry name" value="Sirohaem_synthase_N"/>
</dbReference>
<dbReference type="InterPro" id="IPR003043">
    <property type="entry name" value="Uropor_MeTrfase_CS"/>
</dbReference>
<dbReference type="NCBIfam" id="TIGR01469">
    <property type="entry name" value="cobA_cysG_Cterm"/>
    <property type="match status" value="1"/>
</dbReference>
<dbReference type="NCBIfam" id="TIGR01470">
    <property type="entry name" value="cysG_Nterm"/>
    <property type="match status" value="1"/>
</dbReference>
<dbReference type="NCBIfam" id="NF004790">
    <property type="entry name" value="PRK06136.1"/>
    <property type="match status" value="1"/>
</dbReference>
<dbReference type="NCBIfam" id="NF007922">
    <property type="entry name" value="PRK10637.1"/>
    <property type="match status" value="1"/>
</dbReference>
<dbReference type="PANTHER" id="PTHR45790:SF1">
    <property type="entry name" value="SIROHEME SYNTHASE"/>
    <property type="match status" value="1"/>
</dbReference>
<dbReference type="PANTHER" id="PTHR45790">
    <property type="entry name" value="SIROHEME SYNTHASE-RELATED"/>
    <property type="match status" value="1"/>
</dbReference>
<dbReference type="Pfam" id="PF10414">
    <property type="entry name" value="CysG_dimeriser"/>
    <property type="match status" value="1"/>
</dbReference>
<dbReference type="Pfam" id="PF13241">
    <property type="entry name" value="NAD_binding_7"/>
    <property type="match status" value="1"/>
</dbReference>
<dbReference type="Pfam" id="PF14824">
    <property type="entry name" value="Sirohm_synth_M"/>
    <property type="match status" value="1"/>
</dbReference>
<dbReference type="Pfam" id="PF00590">
    <property type="entry name" value="TP_methylase"/>
    <property type="match status" value="1"/>
</dbReference>
<dbReference type="PIRSF" id="PIRSF036426">
    <property type="entry name" value="Sirohaem_synth"/>
    <property type="match status" value="1"/>
</dbReference>
<dbReference type="SUPFAM" id="SSF51735">
    <property type="entry name" value="NAD(P)-binding Rossmann-fold domains"/>
    <property type="match status" value="1"/>
</dbReference>
<dbReference type="SUPFAM" id="SSF75615">
    <property type="entry name" value="Siroheme synthase middle domains-like"/>
    <property type="match status" value="1"/>
</dbReference>
<dbReference type="SUPFAM" id="SSF53790">
    <property type="entry name" value="Tetrapyrrole methylase"/>
    <property type="match status" value="1"/>
</dbReference>
<dbReference type="PROSITE" id="PS00839">
    <property type="entry name" value="SUMT_1"/>
    <property type="match status" value="1"/>
</dbReference>
<dbReference type="PROSITE" id="PS00840">
    <property type="entry name" value="SUMT_2"/>
    <property type="match status" value="1"/>
</dbReference>
<keyword id="KW-0169">Cobalamin biosynthesis</keyword>
<keyword id="KW-0456">Lyase</keyword>
<keyword id="KW-0489">Methyltransferase</keyword>
<keyword id="KW-0511">Multifunctional enzyme</keyword>
<keyword id="KW-0520">NAD</keyword>
<keyword id="KW-0560">Oxidoreductase</keyword>
<keyword id="KW-0597">Phosphoprotein</keyword>
<keyword id="KW-0627">Porphyrin biosynthesis</keyword>
<keyword id="KW-0949">S-adenosyl-L-methionine</keyword>
<keyword id="KW-0808">Transferase</keyword>
<name>CYSG2_YERPP</name>